<accession>P44151</accession>
<feature type="chain" id="PRO_0000078021" description="Uncharacterized protein HI_1280">
    <location>
        <begin position="1"/>
        <end position="91"/>
    </location>
</feature>
<feature type="domain" description="Integrase catalytic" evidence="1">
    <location>
        <begin position="1"/>
        <end position="91"/>
    </location>
</feature>
<proteinExistence type="predicted"/>
<gene>
    <name type="ordered locus">HI_1280</name>
</gene>
<name>Y1280_HAEIN</name>
<evidence type="ECO:0000255" key="1">
    <source>
        <dbReference type="PROSITE-ProRule" id="PRU00457"/>
    </source>
</evidence>
<protein>
    <recommendedName>
        <fullName>Uncharacterized protein HI_1280</fullName>
    </recommendedName>
</protein>
<keyword id="KW-1185">Reference proteome</keyword>
<organism>
    <name type="scientific">Haemophilus influenzae (strain ATCC 51907 / DSM 11121 / KW20 / Rd)</name>
    <dbReference type="NCBI Taxonomy" id="71421"/>
    <lineage>
        <taxon>Bacteria</taxon>
        <taxon>Pseudomonadati</taxon>
        <taxon>Pseudomonadota</taxon>
        <taxon>Gammaproteobacteria</taxon>
        <taxon>Pasteurellales</taxon>
        <taxon>Pasteurellaceae</taxon>
        <taxon>Haemophilus</taxon>
    </lineage>
</organism>
<sequence length="91" mass="10671">MLTFWHWKWLGIKNTEFKCVKGKLYLSPIKDLFNNEIIAYDLVRSPNSEQITQMMKQAVARLAGAKPILHSDQGWQYQMIGYQNILRENGI</sequence>
<dbReference type="EMBL" id="L42023">
    <property type="protein sequence ID" value="AAC22928.1"/>
    <property type="molecule type" value="Genomic_DNA"/>
</dbReference>
<dbReference type="PIR" id="G64024">
    <property type="entry name" value="G64024"/>
</dbReference>
<dbReference type="SMR" id="P44151"/>
<dbReference type="STRING" id="71421.HI_1280"/>
<dbReference type="EnsemblBacteria" id="AAC22928">
    <property type="protein sequence ID" value="AAC22928"/>
    <property type="gene ID" value="HI_1280"/>
</dbReference>
<dbReference type="KEGG" id="hin:HI_1280"/>
<dbReference type="eggNOG" id="COG2801">
    <property type="taxonomic scope" value="Bacteria"/>
</dbReference>
<dbReference type="HOGENOM" id="CLU_027402_21_6_6"/>
<dbReference type="PhylomeDB" id="P44151"/>
<dbReference type="Proteomes" id="UP000000579">
    <property type="component" value="Chromosome"/>
</dbReference>
<dbReference type="GO" id="GO:0003676">
    <property type="term" value="F:nucleic acid binding"/>
    <property type="evidence" value="ECO:0007669"/>
    <property type="project" value="InterPro"/>
</dbReference>
<dbReference type="GO" id="GO:0015074">
    <property type="term" value="P:DNA integration"/>
    <property type="evidence" value="ECO:0007669"/>
    <property type="project" value="InterPro"/>
</dbReference>
<dbReference type="Gene3D" id="3.30.420.10">
    <property type="entry name" value="Ribonuclease H-like superfamily/Ribonuclease H"/>
    <property type="match status" value="1"/>
</dbReference>
<dbReference type="InterPro" id="IPR001584">
    <property type="entry name" value="Integrase_cat-core"/>
</dbReference>
<dbReference type="InterPro" id="IPR012337">
    <property type="entry name" value="RNaseH-like_sf"/>
</dbReference>
<dbReference type="InterPro" id="IPR036397">
    <property type="entry name" value="RNaseH_sf"/>
</dbReference>
<dbReference type="Pfam" id="PF00665">
    <property type="entry name" value="rve"/>
    <property type="match status" value="1"/>
</dbReference>
<dbReference type="SUPFAM" id="SSF53098">
    <property type="entry name" value="Ribonuclease H-like"/>
    <property type="match status" value="1"/>
</dbReference>
<dbReference type="PROSITE" id="PS50994">
    <property type="entry name" value="INTEGRASE"/>
    <property type="match status" value="1"/>
</dbReference>
<reference key="1">
    <citation type="journal article" date="1995" name="Science">
        <title>Whole-genome random sequencing and assembly of Haemophilus influenzae Rd.</title>
        <authorList>
            <person name="Fleischmann R.D."/>
            <person name="Adams M.D."/>
            <person name="White O."/>
            <person name="Clayton R.A."/>
            <person name="Kirkness E.F."/>
            <person name="Kerlavage A.R."/>
            <person name="Bult C.J."/>
            <person name="Tomb J.-F."/>
            <person name="Dougherty B.A."/>
            <person name="Merrick J.M."/>
            <person name="McKenney K."/>
            <person name="Sutton G.G."/>
            <person name="FitzHugh W."/>
            <person name="Fields C.A."/>
            <person name="Gocayne J.D."/>
            <person name="Scott J.D."/>
            <person name="Shirley R."/>
            <person name="Liu L.-I."/>
            <person name="Glodek A."/>
            <person name="Kelley J.M."/>
            <person name="Weidman J.F."/>
            <person name="Phillips C.A."/>
            <person name="Spriggs T."/>
            <person name="Hedblom E."/>
            <person name="Cotton M.D."/>
            <person name="Utterback T.R."/>
            <person name="Hanna M.C."/>
            <person name="Nguyen D.T."/>
            <person name="Saudek D.M."/>
            <person name="Brandon R.C."/>
            <person name="Fine L.D."/>
            <person name="Fritchman J.L."/>
            <person name="Fuhrmann J.L."/>
            <person name="Geoghagen N.S.M."/>
            <person name="Gnehm C.L."/>
            <person name="McDonald L.A."/>
            <person name="Small K.V."/>
            <person name="Fraser C.M."/>
            <person name="Smith H.O."/>
            <person name="Venter J.C."/>
        </authorList>
    </citation>
    <scope>NUCLEOTIDE SEQUENCE [LARGE SCALE GENOMIC DNA]</scope>
    <source>
        <strain>ATCC 51907 / DSM 11121 / KW20 / Rd</strain>
    </source>
</reference>
<reference key="2">
    <citation type="submission" date="1998-05" db="EMBL/GenBank/DDBJ databases">
        <authorList>
            <person name="White O."/>
            <person name="Clayton R.A."/>
            <person name="Kerlavage A.R."/>
            <person name="Fleischmann R.D."/>
            <person name="Peterson J."/>
            <person name="Hickey E."/>
            <person name="Dodson R."/>
            <person name="Gwinn M."/>
        </authorList>
    </citation>
    <scope>SEQUENCE REVISION</scope>
</reference>